<organism>
    <name type="scientific">Oenothera argillicola</name>
    <name type="common">Appalachian evening primrose</name>
    <dbReference type="NCBI Taxonomy" id="3940"/>
    <lineage>
        <taxon>Eukaryota</taxon>
        <taxon>Viridiplantae</taxon>
        <taxon>Streptophyta</taxon>
        <taxon>Embryophyta</taxon>
        <taxon>Tracheophyta</taxon>
        <taxon>Spermatophyta</taxon>
        <taxon>Magnoliopsida</taxon>
        <taxon>eudicotyledons</taxon>
        <taxon>Gunneridae</taxon>
        <taxon>Pentapetalae</taxon>
        <taxon>rosids</taxon>
        <taxon>malvids</taxon>
        <taxon>Myrtales</taxon>
        <taxon>Onagraceae</taxon>
        <taxon>Onagroideae</taxon>
        <taxon>Onagreae</taxon>
        <taxon>Oenothera</taxon>
    </lineage>
</organism>
<accession>P19819</accession>
<accession>B0Z4Q2</accession>
<feature type="chain" id="PRO_0000077490" description="Photosystem II CP47 reaction center protein">
    <location>
        <begin position="1"/>
        <end position="508"/>
    </location>
</feature>
<feature type="transmembrane region" description="Helical" evidence="1">
    <location>
        <begin position="21"/>
        <end position="36"/>
    </location>
</feature>
<feature type="transmembrane region" description="Helical" evidence="1">
    <location>
        <begin position="101"/>
        <end position="115"/>
    </location>
</feature>
<feature type="transmembrane region" description="Helical" evidence="1">
    <location>
        <begin position="140"/>
        <end position="156"/>
    </location>
</feature>
<feature type="transmembrane region" description="Helical" evidence="1">
    <location>
        <begin position="203"/>
        <end position="218"/>
    </location>
</feature>
<feature type="transmembrane region" description="Helical" evidence="1">
    <location>
        <begin position="237"/>
        <end position="252"/>
    </location>
</feature>
<feature type="transmembrane region" description="Helical" evidence="1">
    <location>
        <begin position="457"/>
        <end position="472"/>
    </location>
</feature>
<gene>
    <name evidence="1" type="primary">psbB</name>
</gene>
<protein>
    <recommendedName>
        <fullName evidence="1">Photosystem II CP47 reaction center protein</fullName>
    </recommendedName>
    <alternativeName>
        <fullName evidence="1">PSII 47 kDa protein</fullName>
    </alternativeName>
    <alternativeName>
        <fullName evidence="1">Protein CP-47</fullName>
    </alternativeName>
</protein>
<name>PSBB_OENAR</name>
<reference key="1">
    <citation type="journal article" date="1990" name="Nucleic Acids Res.">
        <title>Nucleotide sequences of psbB and psbH, the plastid encoded genes for CP47 and the 10 kDa phosphoprotein of photosystem II in Oenothera hookeri and argillicola.</title>
        <authorList>
            <person name="Offermann-Steinhard K."/>
            <person name="Herrmann R.G."/>
        </authorList>
    </citation>
    <scope>NUCLEOTIDE SEQUENCE [GENOMIC DNA]</scope>
</reference>
<reference key="2">
    <citation type="journal article" date="2008" name="Nucleic Acids Res.">
        <title>The complete nucleotide sequences of the five genetically distinct plastid genomes of Oenothera, subsection Oenothera: I. Sequence evaluation and plastome evolution.</title>
        <authorList>
            <person name="Greiner S."/>
            <person name="Wang X."/>
            <person name="Rauwolf U."/>
            <person name="Silber M.V."/>
            <person name="Mayer K."/>
            <person name="Meurer J."/>
            <person name="Haberer G."/>
            <person name="Herrmann R.G."/>
        </authorList>
    </citation>
    <scope>NUCLEOTIDE SEQUENCE [LARGE SCALE GENOMIC DNA]</scope>
    <source>
        <strain>cv. Douthat 1</strain>
    </source>
</reference>
<proteinExistence type="inferred from homology"/>
<evidence type="ECO:0000255" key="1">
    <source>
        <dbReference type="HAMAP-Rule" id="MF_01495"/>
    </source>
</evidence>
<geneLocation type="chloroplast"/>
<dbReference type="EMBL" id="X55899">
    <property type="protein sequence ID" value="CAA39388.1"/>
    <property type="molecule type" value="Genomic_DNA"/>
</dbReference>
<dbReference type="EMBL" id="EU262887">
    <property type="protein sequence ID" value="ABW98730.1"/>
    <property type="molecule type" value="Genomic_DNA"/>
</dbReference>
<dbReference type="PIR" id="S12129">
    <property type="entry name" value="S12129"/>
</dbReference>
<dbReference type="RefSeq" id="YP_001687163.1">
    <property type="nucleotide sequence ID" value="NC_010358.2"/>
</dbReference>
<dbReference type="SMR" id="P19819"/>
<dbReference type="GeneID" id="5951870"/>
<dbReference type="GO" id="GO:0009535">
    <property type="term" value="C:chloroplast thylakoid membrane"/>
    <property type="evidence" value="ECO:0007669"/>
    <property type="project" value="UniProtKB-SubCell"/>
</dbReference>
<dbReference type="GO" id="GO:0009523">
    <property type="term" value="C:photosystem II"/>
    <property type="evidence" value="ECO:0007669"/>
    <property type="project" value="UniProtKB-KW"/>
</dbReference>
<dbReference type="GO" id="GO:0016168">
    <property type="term" value="F:chlorophyll binding"/>
    <property type="evidence" value="ECO:0007669"/>
    <property type="project" value="UniProtKB-UniRule"/>
</dbReference>
<dbReference type="GO" id="GO:0045156">
    <property type="term" value="F:electron transporter, transferring electrons within the cyclic electron transport pathway of photosynthesis activity"/>
    <property type="evidence" value="ECO:0007669"/>
    <property type="project" value="InterPro"/>
</dbReference>
<dbReference type="GO" id="GO:0009772">
    <property type="term" value="P:photosynthetic electron transport in photosystem II"/>
    <property type="evidence" value="ECO:0007669"/>
    <property type="project" value="InterPro"/>
</dbReference>
<dbReference type="FunFam" id="3.10.680.10:FF:000001">
    <property type="entry name" value="Photosystem II CP47 reaction center protein"/>
    <property type="match status" value="1"/>
</dbReference>
<dbReference type="Gene3D" id="3.10.680.10">
    <property type="entry name" value="Photosystem II CP47 reaction center protein"/>
    <property type="match status" value="1"/>
</dbReference>
<dbReference type="HAMAP" id="MF_01495">
    <property type="entry name" value="PSII_PsbB_CP47"/>
    <property type="match status" value="1"/>
</dbReference>
<dbReference type="InterPro" id="IPR000932">
    <property type="entry name" value="PS_antenna-like"/>
</dbReference>
<dbReference type="InterPro" id="IPR036001">
    <property type="entry name" value="PS_II_antenna-like_sf"/>
</dbReference>
<dbReference type="InterPro" id="IPR017486">
    <property type="entry name" value="PSII_PsbB"/>
</dbReference>
<dbReference type="NCBIfam" id="TIGR03039">
    <property type="entry name" value="PS_II_CP47"/>
    <property type="match status" value="1"/>
</dbReference>
<dbReference type="PANTHER" id="PTHR33180">
    <property type="entry name" value="PHOTOSYSTEM II CP43 REACTION CENTER PROTEIN"/>
    <property type="match status" value="1"/>
</dbReference>
<dbReference type="PANTHER" id="PTHR33180:SF35">
    <property type="entry name" value="PHOTOSYSTEM II CP47 REACTION CENTER PROTEIN"/>
    <property type="match status" value="1"/>
</dbReference>
<dbReference type="Pfam" id="PF00421">
    <property type="entry name" value="PSII"/>
    <property type="match status" value="1"/>
</dbReference>
<dbReference type="SUPFAM" id="SSF161077">
    <property type="entry name" value="Photosystem II antenna protein-like"/>
    <property type="match status" value="1"/>
</dbReference>
<sequence length="508" mass="55998">MGLPWYRVHTVVLNDPGRLLAVHIMHTALVAGWAGSMALYELAVFDPSDPVLDPMWRQGMFVIPFMTRLGITNSWGGWSITGGTVTNPGIWSYEGVAGSHILFSGLCFLAAIWHWVYWDLAIFSDERTGKPSLDLPKIFGIHLFLSGLACFGFGAFHVTGLYGPGIWVSDPYGLTGEVQPVNPAWGVEGFDPFVPGGIASHHIAAGTLGILAGLFHLSVRPPQRLYKGLRMGNIETVLSSSIAAVFFAAFVVAGTMWYGSATTPIELFGPTRYQWDQGYFQQEIYRRVGAGLAKNQSLSEAWSKIPEKLAFYDYIGNNPAKGGLFRAGSMDSGDGIAVGWLGHPIFRDKEGRELFVRRMPTFFETFPVVLVDGDGIVRADVPFRRAESKYSVEQVGVTVEFYGGELNGVSYSDPATVKKYARRAQLGEIFELDRATLKSDGVFRSSPRGWFTFGHASFALLFFFGHIWHGARTLFRDVFAGIDPDLDTQVEFGAFQKLGDPTTRRQAV</sequence>
<comment type="function">
    <text evidence="1">One of the components of the core complex of photosystem II (PSII). It binds chlorophyll and helps catalyze the primary light-induced photochemical processes of PSII. PSII is a light-driven water:plastoquinone oxidoreductase, using light energy to abstract electrons from H(2)O, generating O(2) and a proton gradient subsequently used for ATP formation.</text>
</comment>
<comment type="cofactor">
    <text evidence="1">Binds multiple chlorophylls. PSII binds additional chlorophylls, carotenoids and specific lipids.</text>
</comment>
<comment type="subunit">
    <text evidence="1">PSII is composed of 1 copy each of membrane proteins PsbA, PsbB, PsbC, PsbD, PsbE, PsbF, PsbH, PsbI, PsbJ, PsbK, PsbL, PsbM, PsbT, PsbX, PsbY, PsbZ, Psb30/Ycf12, at least 3 peripheral proteins of the oxygen-evolving complex and a large number of cofactors. It forms dimeric complexes.</text>
</comment>
<comment type="subcellular location">
    <subcellularLocation>
        <location evidence="1">Plastid</location>
        <location evidence="1">Chloroplast thylakoid membrane</location>
        <topology evidence="1">Multi-pass membrane protein</topology>
    </subcellularLocation>
</comment>
<comment type="similarity">
    <text evidence="1">Belongs to the PsbB/PsbC family. PsbB subfamily.</text>
</comment>
<keyword id="KW-0148">Chlorophyll</keyword>
<keyword id="KW-0150">Chloroplast</keyword>
<keyword id="KW-0157">Chromophore</keyword>
<keyword id="KW-0472">Membrane</keyword>
<keyword id="KW-0602">Photosynthesis</keyword>
<keyword id="KW-0604">Photosystem II</keyword>
<keyword id="KW-0934">Plastid</keyword>
<keyword id="KW-0793">Thylakoid</keyword>
<keyword id="KW-0812">Transmembrane</keyword>
<keyword id="KW-1133">Transmembrane helix</keyword>